<gene>
    <name type="primary">bun</name>
    <name type="synonym">shs</name>
    <name type="ORF">CG42281</name>
</gene>
<feature type="chain" id="PRO_0000219376" description="Protein bunched, class 1/class 3/D/E isoforms">
    <location>
        <begin position="1"/>
        <end position="219"/>
    </location>
</feature>
<feature type="region of interest" description="Leucine-zipper">
    <location>
        <begin position="82"/>
        <end position="103"/>
    </location>
</feature>
<feature type="splice variant" id="VSP_010282" description="In isoform Class 3." evidence="3">
    <original>MKTETGSNNNNTTVVNMDFDMYPSISGKQQDPVREVVMKYIDYFLPDASGTSAVAIDNKIEQAM</original>
    <variation>MMGTMSLRQPENWLYEIWQKGYDSPCYVMVPNAK</variation>
    <location>
        <begin position="1"/>
        <end position="64"/>
    </location>
</feature>
<feature type="splice variant" id="VSP_035859" description="In isoform E." evidence="4">
    <original>MKTETGSNNNNTTVVNMDFDMYPSISGKQQDPVREVVMKYIDYFLPD</original>
    <variation>MAALANKMAANMATTSSSSNNNNIAGSESTLQQQQMLHHQQQQQQQTQSNLIMPAAVIQPEYLLNNDRGLFKVYCFIKDFIG</variation>
    <location>
        <begin position="1"/>
        <end position="47"/>
    </location>
</feature>
<feature type="splice variant" id="VSP_035860" description="In isoform D." evidence="4">
    <original>KTETGSNNNNTTVVNMDFDMYPSISGKQQDPVREVVMKYIDYFLPD</original>
    <variation>IKYPRTTSSTSSGYFDDDEAMMNPYQTPPASPQSVPQYLQRHMVRMFSTEVDN</variation>
    <location>
        <begin position="2"/>
        <end position="47"/>
    </location>
</feature>
<feature type="sequence conflict" description="In Ref. 2; AAB61239." evidence="4" ref="2">
    <original>Q</original>
    <variation>E</variation>
    <location>
        <position position="30"/>
    </location>
</feature>
<feature type="sequence conflict" description="In Ref. 2; AAB61239." evidence="4" ref="2">
    <original>R</original>
    <variation>C</variation>
    <location>
        <position position="34"/>
    </location>
</feature>
<feature type="sequence conflict" description="In Ref. 2; AAB61239." evidence="4" ref="2">
    <original>N</original>
    <variation>H</variation>
    <location>
        <position position="100"/>
    </location>
</feature>
<feature type="sequence conflict" description="In Ref. 2; AAB61239." evidence="4" ref="2">
    <original>N</original>
    <variation>K</variation>
    <location>
        <position position="106"/>
    </location>
</feature>
<feature type="sequence conflict" description="In Ref. 2; AAB61239." evidence="4" ref="2">
    <original>AA</original>
    <variation>PR</variation>
    <location>
        <begin position="122"/>
        <end position="123"/>
    </location>
</feature>
<feature type="sequence conflict" description="In Ref. 2; AAB61239." evidence="4" ref="2">
    <original>E</original>
    <variation>G</variation>
    <location>
        <position position="188"/>
    </location>
</feature>
<feature type="sequence conflict" description="In Ref. 2; AAB61239." evidence="4" ref="2">
    <original>V</original>
    <variation>G</variation>
    <location>
        <position position="192"/>
    </location>
</feature>
<feature type="sequence conflict" description="In Ref. 1; AAC41607 and 2; AAB61239." evidence="4" ref="1 2">
    <original>TS</original>
    <variation>QQVTSAA</variation>
    <location>
        <begin position="202"/>
        <end position="203"/>
    </location>
</feature>
<organism>
    <name type="scientific">Drosophila melanogaster</name>
    <name type="common">Fruit fly</name>
    <dbReference type="NCBI Taxonomy" id="7227"/>
    <lineage>
        <taxon>Eukaryota</taxon>
        <taxon>Metazoa</taxon>
        <taxon>Ecdysozoa</taxon>
        <taxon>Arthropoda</taxon>
        <taxon>Hexapoda</taxon>
        <taxon>Insecta</taxon>
        <taxon>Pterygota</taxon>
        <taxon>Neoptera</taxon>
        <taxon>Endopterygota</taxon>
        <taxon>Diptera</taxon>
        <taxon>Brachycera</taxon>
        <taxon>Muscomorpha</taxon>
        <taxon>Ephydroidea</taxon>
        <taxon>Drosophilidae</taxon>
        <taxon>Drosophila</taxon>
        <taxon>Sophophora</taxon>
    </lineage>
</organism>
<comment type="function">
    <text evidence="1 2">Probable transcription factor required for peripheral nervous system morphogenesis, eye development and oogenesis. May be required for the transmission of the dpp signal and for a morphogenetic movement of the medulla in the brain that reorients the second optic lobe relative to the first. Plays a role in determining proper dorsal cell fates leading to the formation of the dorsal appendages.</text>
</comment>
<comment type="subcellular location">
    <subcellularLocation>
        <location evidence="1">Cytoplasm</location>
    </subcellularLocation>
    <subcellularLocation>
        <location evidence="1">Nucleus</location>
    </subcellularLocation>
</comment>
<comment type="alternative products">
    <event type="alternative splicing"/>
    <isoform>
        <id>Q24522-1</id>
        <name>Class 1</name>
        <name>B</name>
        <sequence type="displayed"/>
    </isoform>
    <isoform>
        <id>Q24522-2</id>
        <id>Q24523-2</id>
        <name>Class 3</name>
        <name>C</name>
        <sequence type="described" ref="VSP_010282"/>
    </isoform>
    <isoform>
        <id>Q24522-3</id>
        <name>D</name>
        <name>H</name>
        <sequence type="described" ref="VSP_035860"/>
    </isoform>
    <isoform>
        <id>Q24522-4</id>
        <name>E</name>
        <sequence type="described" ref="VSP_035859"/>
    </isoform>
    <isoform>
        <id>Q24523-1</id>
        <name>Class 2</name>
        <name>A</name>
        <sequence type="external"/>
    </isoform>
    <isoform>
        <id>Q24523-3</id>
        <name>F</name>
        <sequence type="external"/>
    </isoform>
    <isoform>
        <id>Q24523-4</id>
        <name>G</name>
        <sequence type="external"/>
    </isoform>
</comment>
<comment type="tissue specificity">
    <text evidence="2">Anterior dorsal follicle cells at stages 10-12 of oogenesis.</text>
</comment>
<comment type="similarity">
    <text evidence="4">Belongs to the TSC-22/Dip/Bun family.</text>
</comment>
<comment type="sequence caution" evidence="4">
    <conflict type="erroneous initiation">
        <sequence resource="EMBL-CDS" id="AAB61239"/>
    </conflict>
    <text>Extended N-terminus.</text>
</comment>
<sequence length="219" mass="22742">MKTETGSNNNNTTVVNMDFDMYPSISGKQQDPVREVVMKYIDYFLPDASGTSAVAIDNKIEQAMDLVKSHLMIAVREEVEVLKERISELMDKINKLELENSILKSNIPQETLQQLQLQLQLAAPPATPAIQAAPAVQSVVAPAAAGQAVQQQAAGAVAVTGVATSPASAVVPTSIPNGSAENGSSAVESAAVSVEQQVQQVTSAAAAAASVVTANGPMS</sequence>
<keyword id="KW-0025">Alternative splicing</keyword>
<keyword id="KW-0963">Cytoplasm</keyword>
<keyword id="KW-0217">Developmental protein</keyword>
<keyword id="KW-0221">Differentiation</keyword>
<keyword id="KW-0539">Nucleus</keyword>
<keyword id="KW-0896">Oogenesis</keyword>
<keyword id="KW-1185">Reference proteome</keyword>
<keyword id="KW-0804">Transcription</keyword>
<keyword id="KW-0805">Transcription regulation</keyword>
<protein>
    <recommendedName>
        <fullName>Protein bunched, class 1/class 3/D/E isoforms</fullName>
    </recommendedName>
    <alternativeName>
        <fullName>Protein shortsighted</fullName>
    </alternativeName>
</protein>
<dbReference type="EMBL" id="L42511">
    <property type="protein sequence ID" value="AAC41607.1"/>
    <property type="molecule type" value="mRNA"/>
</dbReference>
<dbReference type="EMBL" id="AF003342">
    <property type="protein sequence ID" value="AAB61239.1"/>
    <property type="status" value="ALT_INIT"/>
    <property type="molecule type" value="mRNA"/>
</dbReference>
<dbReference type="EMBL" id="AE014134">
    <property type="protein sequence ID" value="AAF53200.3"/>
    <property type="molecule type" value="Genomic_DNA"/>
</dbReference>
<dbReference type="EMBL" id="AE014134">
    <property type="protein sequence ID" value="AAN10817.1"/>
    <property type="molecule type" value="Genomic_DNA"/>
</dbReference>
<dbReference type="EMBL" id="AE014134">
    <property type="protein sequence ID" value="ABI31312.1"/>
    <property type="molecule type" value="Genomic_DNA"/>
</dbReference>
<dbReference type="EMBL" id="AE014134">
    <property type="protein sequence ID" value="ACZ94250.1"/>
    <property type="molecule type" value="Genomic_DNA"/>
</dbReference>
<dbReference type="EMBL" id="AE014134">
    <property type="protein sequence ID" value="ACZ94251.1"/>
    <property type="molecule type" value="Genomic_DNA"/>
</dbReference>
<dbReference type="EMBL" id="AY060295">
    <property type="protein sequence ID" value="AAL25334.1"/>
    <property type="molecule type" value="mRNA"/>
</dbReference>
<dbReference type="RefSeq" id="NP_001036358.1">
    <molecule id="Q24522-4"/>
    <property type="nucleotide sequence ID" value="NM_001042893.2"/>
</dbReference>
<dbReference type="RefSeq" id="NP_001162964.1">
    <molecule id="Q24522-3"/>
    <property type="nucleotide sequence ID" value="NM_001169493.2"/>
</dbReference>
<dbReference type="RefSeq" id="NP_001162965.1">
    <molecule id="Q24522-1"/>
    <property type="nucleotide sequence ID" value="NM_001169494.2"/>
</dbReference>
<dbReference type="RefSeq" id="NP_723755.2">
    <molecule id="Q24522-3"/>
    <property type="nucleotide sequence ID" value="NM_165012.2"/>
</dbReference>
<dbReference type="RefSeq" id="NP_723756.1">
    <molecule id="Q24522-2"/>
    <property type="nucleotide sequence ID" value="NM_165013.4"/>
</dbReference>
<dbReference type="SMR" id="Q24522"/>
<dbReference type="BioGRID" id="60711">
    <property type="interactions" value="33"/>
</dbReference>
<dbReference type="IntAct" id="Q24522">
    <property type="interactions" value="7"/>
</dbReference>
<dbReference type="DNASU" id="34665"/>
<dbReference type="EnsemblMetazoa" id="FBtr0299652">
    <molecule id="Q24522-3"/>
    <property type="protein sequence ID" value="FBpp0288927"/>
    <property type="gene ID" value="FBgn0259176"/>
</dbReference>
<dbReference type="EnsemblMetazoa" id="FBtr0299656">
    <molecule id="Q24522-1"/>
    <property type="protein sequence ID" value="FBpp0288931"/>
    <property type="gene ID" value="FBgn0259176"/>
</dbReference>
<dbReference type="EnsemblMetazoa" id="FBtr0299657">
    <molecule id="Q24522-2"/>
    <property type="protein sequence ID" value="FBpp0288932"/>
    <property type="gene ID" value="FBgn0259176"/>
</dbReference>
<dbReference type="EnsemblMetazoa" id="FBtr0300522">
    <molecule id="Q24522-4"/>
    <property type="protein sequence ID" value="FBpp0289749"/>
    <property type="gene ID" value="FBgn0259176"/>
</dbReference>
<dbReference type="EnsemblMetazoa" id="FBtr0300524">
    <molecule id="Q24522-3"/>
    <property type="protein sequence ID" value="FBpp0289751"/>
    <property type="gene ID" value="FBgn0259176"/>
</dbReference>
<dbReference type="GeneID" id="34665"/>
<dbReference type="AGR" id="FB:FBgn0259176"/>
<dbReference type="CTD" id="34665"/>
<dbReference type="FlyBase" id="FBgn0259176">
    <property type="gene designation" value="bun"/>
</dbReference>
<dbReference type="VEuPathDB" id="VectorBase:FBgn0259176"/>
<dbReference type="GeneTree" id="ENSGT00940000168943"/>
<dbReference type="OrthoDB" id="8961796at2759"/>
<dbReference type="BioGRID-ORCS" id="34665">
    <property type="hits" value="1 hit in 3 CRISPR screens"/>
</dbReference>
<dbReference type="ChiTaRS" id="bun">
    <property type="organism name" value="fly"/>
</dbReference>
<dbReference type="GenomeRNAi" id="34665"/>
<dbReference type="Proteomes" id="UP000000803">
    <property type="component" value="Chromosome 2L"/>
</dbReference>
<dbReference type="Bgee" id="FBgn0259176">
    <property type="expression patterns" value="Expressed in adult Malpighian tubule tiny cell (Drosophila) in Malpighian tubule and 301 other cell types or tissues"/>
</dbReference>
<dbReference type="ExpressionAtlas" id="Q24522">
    <property type="expression patterns" value="baseline and differential"/>
</dbReference>
<dbReference type="GO" id="GO:0005829">
    <property type="term" value="C:cytosol"/>
    <property type="evidence" value="ECO:0000314"/>
    <property type="project" value="FlyBase"/>
</dbReference>
<dbReference type="GO" id="GO:0005634">
    <property type="term" value="C:nucleus"/>
    <property type="evidence" value="ECO:0000318"/>
    <property type="project" value="GO_Central"/>
</dbReference>
<dbReference type="GO" id="GO:0042803">
    <property type="term" value="F:protein homodimerization activity"/>
    <property type="evidence" value="ECO:0000250"/>
    <property type="project" value="FlyBase"/>
</dbReference>
<dbReference type="GO" id="GO:0007304">
    <property type="term" value="P:chorion-containing eggshell formation"/>
    <property type="evidence" value="ECO:0000315"/>
    <property type="project" value="FlyBase"/>
</dbReference>
<dbReference type="GO" id="GO:0001751">
    <property type="term" value="P:compound eye photoreceptor cell differentiation"/>
    <property type="evidence" value="ECO:0000315"/>
    <property type="project" value="FlyBase"/>
</dbReference>
<dbReference type="GO" id="GO:0008340">
    <property type="term" value="P:determination of adult lifespan"/>
    <property type="evidence" value="ECO:0000315"/>
    <property type="project" value="FlyBase"/>
</dbReference>
<dbReference type="GO" id="GO:0046843">
    <property type="term" value="P:dorsal appendage formation"/>
    <property type="evidence" value="ECO:0000315"/>
    <property type="project" value="FlyBase"/>
</dbReference>
<dbReference type="GO" id="GO:0007297">
    <property type="term" value="P:follicle cell of egg chamber migration"/>
    <property type="evidence" value="ECO:0000315"/>
    <property type="project" value="FlyBase"/>
</dbReference>
<dbReference type="GO" id="GO:0036335">
    <property type="term" value="P:intestinal stem cell homeostasis"/>
    <property type="evidence" value="ECO:0000315"/>
    <property type="project" value="FlyBase"/>
</dbReference>
<dbReference type="GO" id="GO:0016319">
    <property type="term" value="P:mushroom body development"/>
    <property type="evidence" value="ECO:0000315"/>
    <property type="project" value="FlyBase"/>
</dbReference>
<dbReference type="GO" id="GO:0043066">
    <property type="term" value="P:negative regulation of apoptotic process"/>
    <property type="evidence" value="ECO:0000315"/>
    <property type="project" value="FlyBase"/>
</dbReference>
<dbReference type="GO" id="GO:0009996">
    <property type="term" value="P:negative regulation of cell fate specification"/>
    <property type="evidence" value="ECO:0000315"/>
    <property type="project" value="FlyBase"/>
</dbReference>
<dbReference type="GO" id="GO:0030307">
    <property type="term" value="P:positive regulation of cell growth"/>
    <property type="evidence" value="ECO:0000315"/>
    <property type="project" value="FlyBase"/>
</dbReference>
<dbReference type="GO" id="GO:0008284">
    <property type="term" value="P:positive regulation of cell population proliferation"/>
    <property type="evidence" value="ECO:0000315"/>
    <property type="project" value="FlyBase"/>
</dbReference>
<dbReference type="GO" id="GO:0002052">
    <property type="term" value="P:positive regulation of neuroblast proliferation"/>
    <property type="evidence" value="ECO:0000315"/>
    <property type="project" value="FlyBase"/>
</dbReference>
<dbReference type="GO" id="GO:0006357">
    <property type="term" value="P:regulation of transcription by RNA polymerase II"/>
    <property type="evidence" value="ECO:0007669"/>
    <property type="project" value="InterPro"/>
</dbReference>
<dbReference type="GO" id="GO:0042246">
    <property type="term" value="P:tissue regeneration"/>
    <property type="evidence" value="ECO:0000315"/>
    <property type="project" value="FlyBase"/>
</dbReference>
<dbReference type="CDD" id="cd21936">
    <property type="entry name" value="ZIP_TSC22D"/>
    <property type="match status" value="1"/>
</dbReference>
<dbReference type="Gene3D" id="1.20.5.490">
    <property type="entry name" value="Single helix bin"/>
    <property type="match status" value="1"/>
</dbReference>
<dbReference type="InterPro" id="IPR000580">
    <property type="entry name" value="TSC22/Bun"/>
</dbReference>
<dbReference type="InterPro" id="IPR047862">
    <property type="entry name" value="TSC22/BUN_CS"/>
</dbReference>
<dbReference type="PANTHER" id="PTHR46745">
    <property type="entry name" value="TSC22 DOMAIN FAMILY PROTEIN 1"/>
    <property type="match status" value="1"/>
</dbReference>
<dbReference type="PANTHER" id="PTHR46745:SF1">
    <property type="entry name" value="TSC22 DOMAIN FAMILY PROTEIN 1"/>
    <property type="match status" value="1"/>
</dbReference>
<dbReference type="Pfam" id="PF01166">
    <property type="entry name" value="TSC22"/>
    <property type="match status" value="1"/>
</dbReference>
<dbReference type="SUPFAM" id="SSF58026">
    <property type="entry name" value="Delta-sleep-inducing peptide immunoreactive peptide"/>
    <property type="match status" value="1"/>
</dbReference>
<dbReference type="PROSITE" id="PS01289">
    <property type="entry name" value="TSC22"/>
    <property type="match status" value="1"/>
</dbReference>
<accession>Q24522</accession>
<accession>E1JH96</accession>
<accession>E1JHG7</accession>
<accession>O02431</accession>
<accession>Q0E8Q8</accession>
<accession>Q0E8Q9</accession>
<accession>Q95T76</accession>
<proteinExistence type="evidence at transcript level"/>
<name>BUN1_DROME</name>
<evidence type="ECO:0000269" key="1">
    <source>
    </source>
</evidence>
<evidence type="ECO:0000269" key="2">
    <source>
    </source>
</evidence>
<evidence type="ECO:0000303" key="3">
    <source>
    </source>
</evidence>
<evidence type="ECO:0000305" key="4"/>
<reference key="1">
    <citation type="journal article" date="1995" name="Development">
        <title>Shortsighted acts in the decapentaplegic pathway in Drosophila eye development and has homology to a mouse TGF-beta-responsive gene.</title>
        <authorList>
            <person name="Treisman J.E."/>
            <person name="Lai Z.-C."/>
            <person name="Rubin G.M."/>
        </authorList>
    </citation>
    <scope>NUCLEOTIDE SEQUENCE [MRNA] (ISOFORM CLASS 1)</scope>
    <scope>ALTERNATIVE SPLICING</scope>
    <scope>FUNCTION</scope>
    <scope>SUBCELLULAR LOCATION</scope>
    <source>
        <tissue>Eye-antennal disk</tissue>
    </source>
</reference>
<reference key="2">
    <citation type="journal article" date="1997" name="Mech. Dev.">
        <title>The Drosophila bunched gene is a homologue of the growth factor stimulated mammalian TSC-22 sequence and is required during oogenesis.</title>
        <authorList>
            <person name="Dobens L."/>
            <person name="Hsu T."/>
            <person name="Twombly V."/>
            <person name="Gelbart W.M."/>
            <person name="Raftery L.A."/>
            <person name="Kafatos F.C."/>
        </authorList>
    </citation>
    <scope>NUCLEOTIDE SEQUENCE [MRNA] (ISOFORM CLASS 1)</scope>
    <scope>FUNCTION</scope>
    <scope>TISSUE SPECIFICITY</scope>
    <source>
        <tissue>Ovary</tissue>
    </source>
</reference>
<reference key="3">
    <citation type="journal article" date="2000" name="Science">
        <title>The genome sequence of Drosophila melanogaster.</title>
        <authorList>
            <person name="Adams M.D."/>
            <person name="Celniker S.E."/>
            <person name="Holt R.A."/>
            <person name="Evans C.A."/>
            <person name="Gocayne J.D."/>
            <person name="Amanatides P.G."/>
            <person name="Scherer S.E."/>
            <person name="Li P.W."/>
            <person name="Hoskins R.A."/>
            <person name="Galle R.F."/>
            <person name="George R.A."/>
            <person name="Lewis S.E."/>
            <person name="Richards S."/>
            <person name="Ashburner M."/>
            <person name="Henderson S.N."/>
            <person name="Sutton G.G."/>
            <person name="Wortman J.R."/>
            <person name="Yandell M.D."/>
            <person name="Zhang Q."/>
            <person name="Chen L.X."/>
            <person name="Brandon R.C."/>
            <person name="Rogers Y.-H.C."/>
            <person name="Blazej R.G."/>
            <person name="Champe M."/>
            <person name="Pfeiffer B.D."/>
            <person name="Wan K.H."/>
            <person name="Doyle C."/>
            <person name="Baxter E.G."/>
            <person name="Helt G."/>
            <person name="Nelson C.R."/>
            <person name="Miklos G.L.G."/>
            <person name="Abril J.F."/>
            <person name="Agbayani A."/>
            <person name="An H.-J."/>
            <person name="Andrews-Pfannkoch C."/>
            <person name="Baldwin D."/>
            <person name="Ballew R.M."/>
            <person name="Basu A."/>
            <person name="Baxendale J."/>
            <person name="Bayraktaroglu L."/>
            <person name="Beasley E.M."/>
            <person name="Beeson K.Y."/>
            <person name="Benos P.V."/>
            <person name="Berman B.P."/>
            <person name="Bhandari D."/>
            <person name="Bolshakov S."/>
            <person name="Borkova D."/>
            <person name="Botchan M.R."/>
            <person name="Bouck J."/>
            <person name="Brokstein P."/>
            <person name="Brottier P."/>
            <person name="Burtis K.C."/>
            <person name="Busam D.A."/>
            <person name="Butler H."/>
            <person name="Cadieu E."/>
            <person name="Center A."/>
            <person name="Chandra I."/>
            <person name="Cherry J.M."/>
            <person name="Cawley S."/>
            <person name="Dahlke C."/>
            <person name="Davenport L.B."/>
            <person name="Davies P."/>
            <person name="de Pablos B."/>
            <person name="Delcher A."/>
            <person name="Deng Z."/>
            <person name="Mays A.D."/>
            <person name="Dew I."/>
            <person name="Dietz S.M."/>
            <person name="Dodson K."/>
            <person name="Doup L.E."/>
            <person name="Downes M."/>
            <person name="Dugan-Rocha S."/>
            <person name="Dunkov B.C."/>
            <person name="Dunn P."/>
            <person name="Durbin K.J."/>
            <person name="Evangelista C.C."/>
            <person name="Ferraz C."/>
            <person name="Ferriera S."/>
            <person name="Fleischmann W."/>
            <person name="Fosler C."/>
            <person name="Gabrielian A.E."/>
            <person name="Garg N.S."/>
            <person name="Gelbart W.M."/>
            <person name="Glasser K."/>
            <person name="Glodek A."/>
            <person name="Gong F."/>
            <person name="Gorrell J.H."/>
            <person name="Gu Z."/>
            <person name="Guan P."/>
            <person name="Harris M."/>
            <person name="Harris N.L."/>
            <person name="Harvey D.A."/>
            <person name="Heiman T.J."/>
            <person name="Hernandez J.R."/>
            <person name="Houck J."/>
            <person name="Hostin D."/>
            <person name="Houston K.A."/>
            <person name="Howland T.J."/>
            <person name="Wei M.-H."/>
            <person name="Ibegwam C."/>
            <person name="Jalali M."/>
            <person name="Kalush F."/>
            <person name="Karpen G.H."/>
            <person name="Ke Z."/>
            <person name="Kennison J.A."/>
            <person name="Ketchum K.A."/>
            <person name="Kimmel B.E."/>
            <person name="Kodira C.D."/>
            <person name="Kraft C.L."/>
            <person name="Kravitz S."/>
            <person name="Kulp D."/>
            <person name="Lai Z."/>
            <person name="Lasko P."/>
            <person name="Lei Y."/>
            <person name="Levitsky A.A."/>
            <person name="Li J.H."/>
            <person name="Li Z."/>
            <person name="Liang Y."/>
            <person name="Lin X."/>
            <person name="Liu X."/>
            <person name="Mattei B."/>
            <person name="McIntosh T.C."/>
            <person name="McLeod M.P."/>
            <person name="McPherson D."/>
            <person name="Merkulov G."/>
            <person name="Milshina N.V."/>
            <person name="Mobarry C."/>
            <person name="Morris J."/>
            <person name="Moshrefi A."/>
            <person name="Mount S.M."/>
            <person name="Moy M."/>
            <person name="Murphy B."/>
            <person name="Murphy L."/>
            <person name="Muzny D.M."/>
            <person name="Nelson D.L."/>
            <person name="Nelson D.R."/>
            <person name="Nelson K.A."/>
            <person name="Nixon K."/>
            <person name="Nusskern D.R."/>
            <person name="Pacleb J.M."/>
            <person name="Palazzolo M."/>
            <person name="Pittman G.S."/>
            <person name="Pan S."/>
            <person name="Pollard J."/>
            <person name="Puri V."/>
            <person name="Reese M.G."/>
            <person name="Reinert K."/>
            <person name="Remington K."/>
            <person name="Saunders R.D.C."/>
            <person name="Scheeler F."/>
            <person name="Shen H."/>
            <person name="Shue B.C."/>
            <person name="Siden-Kiamos I."/>
            <person name="Simpson M."/>
            <person name="Skupski M.P."/>
            <person name="Smith T.J."/>
            <person name="Spier E."/>
            <person name="Spradling A.C."/>
            <person name="Stapleton M."/>
            <person name="Strong R."/>
            <person name="Sun E."/>
            <person name="Svirskas R."/>
            <person name="Tector C."/>
            <person name="Turner R."/>
            <person name="Venter E."/>
            <person name="Wang A.H."/>
            <person name="Wang X."/>
            <person name="Wang Z.-Y."/>
            <person name="Wassarman D.A."/>
            <person name="Weinstock G.M."/>
            <person name="Weissenbach J."/>
            <person name="Williams S.M."/>
            <person name="Woodage T."/>
            <person name="Worley K.C."/>
            <person name="Wu D."/>
            <person name="Yang S."/>
            <person name="Yao Q.A."/>
            <person name="Ye J."/>
            <person name="Yeh R.-F."/>
            <person name="Zaveri J.S."/>
            <person name="Zhan M."/>
            <person name="Zhang G."/>
            <person name="Zhao Q."/>
            <person name="Zheng L."/>
            <person name="Zheng X.H."/>
            <person name="Zhong F.N."/>
            <person name="Zhong W."/>
            <person name="Zhou X."/>
            <person name="Zhu S.C."/>
            <person name="Zhu X."/>
            <person name="Smith H.O."/>
            <person name="Gibbs R.A."/>
            <person name="Myers E.W."/>
            <person name="Rubin G.M."/>
            <person name="Venter J.C."/>
        </authorList>
    </citation>
    <scope>NUCLEOTIDE SEQUENCE [LARGE SCALE GENOMIC DNA]</scope>
    <source>
        <strain>Berkeley</strain>
    </source>
</reference>
<reference key="4">
    <citation type="journal article" date="2002" name="Genome Biol.">
        <title>Annotation of the Drosophila melanogaster euchromatic genome: a systematic review.</title>
        <authorList>
            <person name="Misra S."/>
            <person name="Crosby M.A."/>
            <person name="Mungall C.J."/>
            <person name="Matthews B.B."/>
            <person name="Campbell K.S."/>
            <person name="Hradecky P."/>
            <person name="Huang Y."/>
            <person name="Kaminker J.S."/>
            <person name="Millburn G.H."/>
            <person name="Prochnik S.E."/>
            <person name="Smith C.D."/>
            <person name="Tupy J.L."/>
            <person name="Whitfield E.J."/>
            <person name="Bayraktaroglu L."/>
            <person name="Berman B.P."/>
            <person name="Bettencourt B.R."/>
            <person name="Celniker S.E."/>
            <person name="de Grey A.D.N.J."/>
            <person name="Drysdale R.A."/>
            <person name="Harris N.L."/>
            <person name="Richter J."/>
            <person name="Russo S."/>
            <person name="Schroeder A.J."/>
            <person name="Shu S.Q."/>
            <person name="Stapleton M."/>
            <person name="Yamada C."/>
            <person name="Ashburner M."/>
            <person name="Gelbart W.M."/>
            <person name="Rubin G.M."/>
            <person name="Lewis S.E."/>
        </authorList>
    </citation>
    <scope>GENOME REANNOTATION</scope>
    <source>
        <strain>Berkeley</strain>
    </source>
</reference>
<reference key="5">
    <citation type="journal article" date="2002" name="Genome Biol.">
        <title>A Drosophila full-length cDNA resource.</title>
        <authorList>
            <person name="Stapleton M."/>
            <person name="Carlson J.W."/>
            <person name="Brokstein P."/>
            <person name="Yu C."/>
            <person name="Champe M."/>
            <person name="George R.A."/>
            <person name="Guarin H."/>
            <person name="Kronmiller B."/>
            <person name="Pacleb J.M."/>
            <person name="Park S."/>
            <person name="Wan K.H."/>
            <person name="Rubin G.M."/>
            <person name="Celniker S.E."/>
        </authorList>
    </citation>
    <scope>NUCLEOTIDE SEQUENCE [LARGE SCALE MRNA] (ISOFORM CLASS 3)</scope>
    <source>
        <strain>Berkeley</strain>
        <tissue>Head</tissue>
    </source>
</reference>